<dbReference type="EC" id="1.17.4.1"/>
<dbReference type="EMBL" id="AL590449">
    <property type="protein sequence ID" value="CAD25811.1"/>
    <property type="molecule type" value="Genomic_DNA"/>
</dbReference>
<dbReference type="RefSeq" id="NP_586207.1">
    <property type="nucleotide sequence ID" value="NM_001042040.1"/>
</dbReference>
<dbReference type="SMR" id="Q8SR37"/>
<dbReference type="FunCoup" id="Q8SR37">
    <property type="interactions" value="245"/>
</dbReference>
<dbReference type="STRING" id="284813.Q8SR37"/>
<dbReference type="GeneID" id="859856"/>
<dbReference type="KEGG" id="ecu:ECU10_0920"/>
<dbReference type="VEuPathDB" id="MicrosporidiaDB:ECU10_0920"/>
<dbReference type="HOGENOM" id="CLU_000404_1_0_1"/>
<dbReference type="InParanoid" id="Q8SR37"/>
<dbReference type="OMA" id="IELPQHM"/>
<dbReference type="OrthoDB" id="3000483at2759"/>
<dbReference type="Proteomes" id="UP000000819">
    <property type="component" value="Chromosome X"/>
</dbReference>
<dbReference type="GO" id="GO:0005971">
    <property type="term" value="C:ribonucleoside-diphosphate reductase complex"/>
    <property type="evidence" value="ECO:0007669"/>
    <property type="project" value="TreeGrafter"/>
</dbReference>
<dbReference type="GO" id="GO:0005524">
    <property type="term" value="F:ATP binding"/>
    <property type="evidence" value="ECO:0007669"/>
    <property type="project" value="UniProtKB-KW"/>
</dbReference>
<dbReference type="GO" id="GO:0004748">
    <property type="term" value="F:ribonucleoside-diphosphate reductase activity, thioredoxin disulfide as acceptor"/>
    <property type="evidence" value="ECO:0000250"/>
    <property type="project" value="UniProtKB"/>
</dbReference>
<dbReference type="GO" id="GO:0009263">
    <property type="term" value="P:deoxyribonucleotide biosynthetic process"/>
    <property type="evidence" value="ECO:0000250"/>
    <property type="project" value="UniProtKB"/>
</dbReference>
<dbReference type="CDD" id="cd01679">
    <property type="entry name" value="RNR_I"/>
    <property type="match status" value="1"/>
</dbReference>
<dbReference type="Gene3D" id="3.20.70.20">
    <property type="match status" value="1"/>
</dbReference>
<dbReference type="InterPro" id="IPR013346">
    <property type="entry name" value="NrdE_NrdA_C"/>
</dbReference>
<dbReference type="InterPro" id="IPR000788">
    <property type="entry name" value="RNR_lg_C"/>
</dbReference>
<dbReference type="InterPro" id="IPR013509">
    <property type="entry name" value="RNR_lsu_N"/>
</dbReference>
<dbReference type="InterPro" id="IPR008926">
    <property type="entry name" value="RNR_R1-su_N"/>
</dbReference>
<dbReference type="InterPro" id="IPR039718">
    <property type="entry name" value="Rrm1"/>
</dbReference>
<dbReference type="NCBIfam" id="TIGR02506">
    <property type="entry name" value="NrdE_NrdA"/>
    <property type="match status" value="1"/>
</dbReference>
<dbReference type="PANTHER" id="PTHR11573">
    <property type="entry name" value="RIBONUCLEOSIDE-DIPHOSPHATE REDUCTASE LARGE CHAIN"/>
    <property type="match status" value="1"/>
</dbReference>
<dbReference type="PANTHER" id="PTHR11573:SF6">
    <property type="entry name" value="RIBONUCLEOSIDE-DIPHOSPHATE REDUCTASE LARGE SUBUNIT"/>
    <property type="match status" value="1"/>
</dbReference>
<dbReference type="Pfam" id="PF02867">
    <property type="entry name" value="Ribonuc_red_lgC"/>
    <property type="match status" value="1"/>
</dbReference>
<dbReference type="Pfam" id="PF00317">
    <property type="entry name" value="Ribonuc_red_lgN"/>
    <property type="match status" value="1"/>
</dbReference>
<dbReference type="PRINTS" id="PR01183">
    <property type="entry name" value="RIBORDTASEM1"/>
</dbReference>
<dbReference type="SUPFAM" id="SSF51998">
    <property type="entry name" value="PFL-like glycyl radical enzymes"/>
    <property type="match status" value="1"/>
</dbReference>
<dbReference type="SUPFAM" id="SSF48168">
    <property type="entry name" value="R1 subunit of ribonucleotide reductase, N-terminal domain"/>
    <property type="match status" value="1"/>
</dbReference>
<dbReference type="PROSITE" id="PS00089">
    <property type="entry name" value="RIBORED_LARGE"/>
    <property type="match status" value="1"/>
</dbReference>
<comment type="function">
    <text evidence="1">Provides the precursors necessary for DNA synthesis. Catalyzes the biosynthesis of deoxyribonucleotides from the corresponding ribonucleotides (By similarity).</text>
</comment>
<comment type="catalytic activity">
    <reaction>
        <text>a 2'-deoxyribonucleoside 5'-diphosphate + [thioredoxin]-disulfide + H2O = a ribonucleoside 5'-diphosphate + [thioredoxin]-dithiol</text>
        <dbReference type="Rhea" id="RHEA:23252"/>
        <dbReference type="Rhea" id="RHEA-COMP:10698"/>
        <dbReference type="Rhea" id="RHEA-COMP:10700"/>
        <dbReference type="ChEBI" id="CHEBI:15377"/>
        <dbReference type="ChEBI" id="CHEBI:29950"/>
        <dbReference type="ChEBI" id="CHEBI:50058"/>
        <dbReference type="ChEBI" id="CHEBI:57930"/>
        <dbReference type="ChEBI" id="CHEBI:73316"/>
        <dbReference type="EC" id="1.17.4.1"/>
    </reaction>
</comment>
<comment type="activity regulation">
    <text evidence="1">Under complex allosteric control mediated by deoxynucleoside triphosphates and ATP binding to separate specificity and activation sites on the large subunit. The type of nucleotide bound at the specificity site determines substrate preference. It seems probable that ATP makes the enzyme reduce CDP and UDP, dGTP favors ADP reduction and dTTP favors GDP reduction. Stimulated by ATP and inhibited by dATP binding to the activity site (By similarity).</text>
</comment>
<comment type="subunit">
    <text evidence="1">Heterodimer of a large and a small subunit.</text>
</comment>
<comment type="similarity">
    <text evidence="3">Belongs to the ribonucleoside diphosphate reductase large chain family.</text>
</comment>
<protein>
    <recommendedName>
        <fullName>Ribonucleoside-diphosphate reductase large chain</fullName>
        <ecNumber>1.17.4.1</ecNumber>
    </recommendedName>
    <alternativeName>
        <fullName>Ribonucleotide reductase</fullName>
    </alternativeName>
</protein>
<name>RIR1_ENCCU</name>
<gene>
    <name type="ordered locus">ECU10_0920</name>
</gene>
<organism>
    <name type="scientific">Encephalitozoon cuniculi (strain GB-M1)</name>
    <name type="common">Microsporidian parasite</name>
    <dbReference type="NCBI Taxonomy" id="284813"/>
    <lineage>
        <taxon>Eukaryota</taxon>
        <taxon>Fungi</taxon>
        <taxon>Fungi incertae sedis</taxon>
        <taxon>Microsporidia</taxon>
        <taxon>Unikaryonidae</taxon>
        <taxon>Encephalitozoon</taxon>
    </lineage>
</organism>
<sequence length="768" mass="87941">MENFSNSKRIKSEKLGIDLIRSRIEGYVKDLKLRHVDVDELVERIVSGWCEDMTRKETIDYCSETAASMITKHPEYGQISSRIIVSYIHEITMDSFVEKIKYIQKHRGMVSEEMYGIILEHGETIEGMINYENDFLFSYFGILTLMKSYLIKVGEEIIERPQDMFMRVALQIHKTDFEKVREVYNLLSGHYFTHATPTLYNSCLKNPQLASCFLITPREDSIEGVYHMINQAAIITKYSGGIGLNLHGIRSKGSSLRSTGGRSNGIIPLIQVLNATKRYINQGAERRPGSIAIFLEPWHMEIFDFLELRKNTGPEEFRARDIFTALWINDLFMERVKNNEEWSLFCPSQAVGLSDVWGEEFNALYCKYEKTISRTVVPAQKLWKAIIEAQIETGTPYMCYKDACNRLSNQQHLGTIKSSNLCAEIVEYSSGEETSVCNLASICLPMFVKDGWFDFEAFRRVVKILTVNLNRVIDFNYYPVEEARRSNMRNRPIGIGVQGLADLFAILRLAFESDGARSLNQDIFEAMYYSAMEASCELAEKEGPFPSYEGSPISKGIFHFELAGRKASGNWDWEGLRERIRRHGVRNSLLIALMPTAGTSQIFGNNEAFEPHASNIYTRRTHAGEFQIVNQHLVNDLVRLGLWSYEMKNLVIENEGSIQNITSIPHEIREIYKTAWEIKMKSVIDLAADRQVFVDQSQSLNIFIAKPTYSQLTSMHFYGYHCGLKTGMYYLRTRPITSAIKFTVDKKLAEKTLSSMNDTDDPCSMCSS</sequence>
<proteinExistence type="inferred from homology"/>
<keyword id="KW-0021">Allosteric enzyme</keyword>
<keyword id="KW-0067">ATP-binding</keyword>
<keyword id="KW-0215">Deoxyribonucleotide synthesis</keyword>
<keyword id="KW-1015">Disulfide bond</keyword>
<keyword id="KW-0547">Nucleotide-binding</keyword>
<keyword id="KW-0560">Oxidoreductase</keyword>
<keyword id="KW-1185">Reference proteome</keyword>
<accession>Q8SR37</accession>
<evidence type="ECO:0000250" key="1"/>
<evidence type="ECO:0000250" key="2">
    <source>
        <dbReference type="UniProtKB" id="P23921"/>
    </source>
</evidence>
<evidence type="ECO:0000305" key="3"/>
<reference key="1">
    <citation type="journal article" date="2001" name="Nature">
        <title>Genome sequence and gene compaction of the eukaryote parasite Encephalitozoon cuniculi.</title>
        <authorList>
            <person name="Katinka M.D."/>
            <person name="Duprat S."/>
            <person name="Cornillot E."/>
            <person name="Metenier G."/>
            <person name="Thomarat F."/>
            <person name="Prensier G."/>
            <person name="Barbe V."/>
            <person name="Peyretaillade E."/>
            <person name="Brottier P."/>
            <person name="Wincker P."/>
            <person name="Delbac F."/>
            <person name="El Alaoui H."/>
            <person name="Peyret P."/>
            <person name="Saurin W."/>
            <person name="Gouy M."/>
            <person name="Weissenbach J."/>
            <person name="Vivares C.P."/>
        </authorList>
    </citation>
    <scope>NUCLEOTIDE SEQUENCE [LARGE SCALE GENOMIC DNA]</scope>
    <source>
        <strain>GB-M1</strain>
    </source>
</reference>
<feature type="chain" id="PRO_0000187200" description="Ribonucleoside-diphosphate reductase large chain">
    <location>
        <begin position="1"/>
        <end position="768"/>
    </location>
</feature>
<feature type="active site" description="Proton acceptor" evidence="1">
    <location>
        <position position="420"/>
    </location>
</feature>
<feature type="active site" description="Cysteine radical intermediate" evidence="1">
    <location>
        <position position="422"/>
    </location>
</feature>
<feature type="active site" description="Proton acceptor" evidence="1">
    <location>
        <position position="424"/>
    </location>
</feature>
<feature type="binding site" evidence="2">
    <location>
        <begin position="7"/>
        <end position="8"/>
    </location>
    <ligand>
        <name>ATP</name>
        <dbReference type="ChEBI" id="CHEBI:30616"/>
        <note>allosteric activator</note>
    </ligand>
</feature>
<feature type="binding site" evidence="2">
    <location>
        <begin position="13"/>
        <end position="19"/>
    </location>
    <ligand>
        <name>ATP</name>
        <dbReference type="ChEBI" id="CHEBI:30616"/>
        <note>allosteric activator</note>
    </ligand>
</feature>
<feature type="binding site" evidence="2">
    <location>
        <position position="196"/>
    </location>
    <ligand>
        <name>GDP</name>
        <dbReference type="ChEBI" id="CHEBI:58189"/>
    </ligand>
</feature>
<feature type="binding site" evidence="2">
    <location>
        <position position="211"/>
    </location>
    <ligand>
        <name>GDP</name>
        <dbReference type="ChEBI" id="CHEBI:58189"/>
    </ligand>
</feature>
<feature type="binding site" evidence="2">
    <location>
        <begin position="220"/>
        <end position="222"/>
    </location>
    <ligand>
        <name>dTTP</name>
        <dbReference type="ChEBI" id="CHEBI:37568"/>
        <note>allosteric effector that controls substrate specificity</note>
    </ligand>
</feature>
<feature type="binding site" evidence="2">
    <location>
        <position position="237"/>
    </location>
    <ligand>
        <name>dTTP</name>
        <dbReference type="ChEBI" id="CHEBI:37568"/>
        <note>allosteric effector that controls substrate specificity</note>
    </ligand>
</feature>
<feature type="binding site" evidence="2">
    <location>
        <position position="250"/>
    </location>
    <ligand>
        <name>dTTP</name>
        <dbReference type="ChEBI" id="CHEBI:37568"/>
        <note>allosteric effector that controls substrate specificity</note>
    </ligand>
</feature>
<feature type="binding site" evidence="2">
    <location>
        <position position="420"/>
    </location>
    <ligand>
        <name>GDP</name>
        <dbReference type="ChEBI" id="CHEBI:58189"/>
    </ligand>
</feature>
<feature type="binding site" evidence="2">
    <location>
        <position position="424"/>
    </location>
    <ligand>
        <name>GDP</name>
        <dbReference type="ChEBI" id="CHEBI:58189"/>
    </ligand>
</feature>
<feature type="site" description="Important for hydrogen atom transfer" evidence="1">
    <location>
        <position position="212"/>
    </location>
</feature>
<feature type="site" description="Important for hydrogen atom transfer" evidence="1">
    <location>
        <position position="437"/>
    </location>
</feature>
<feature type="site" description="Important for electron transfer" evidence="1">
    <location>
        <position position="729"/>
    </location>
</feature>
<feature type="site" description="Important for electron transfer" evidence="1">
    <location>
        <position position="730"/>
    </location>
</feature>
<feature type="site" description="Interacts with thioredoxin/glutaredoxin" evidence="1">
    <location>
        <position position="763"/>
    </location>
</feature>
<feature type="site" description="Interacts with thioredoxin/glutaredoxin" evidence="1">
    <location>
        <position position="766"/>
    </location>
</feature>
<feature type="disulfide bond" description="Redox-active" evidence="1">
    <location>
        <begin position="212"/>
        <end position="437"/>
    </location>
</feature>